<keyword id="KW-0029">Amino-acid transport</keyword>
<keyword id="KW-0997">Cell inner membrane</keyword>
<keyword id="KW-1003">Cell membrane</keyword>
<keyword id="KW-0472">Membrane</keyword>
<keyword id="KW-0769">Symport</keyword>
<keyword id="KW-0812">Transmembrane</keyword>
<keyword id="KW-1133">Transmembrane helix</keyword>
<keyword id="KW-0813">Transport</keyword>
<evidence type="ECO:0000255" key="1">
    <source>
        <dbReference type="HAMAP-Rule" id="MF_01582"/>
    </source>
</evidence>
<gene>
    <name evidence="1" type="primary">sstT</name>
    <name type="ordered locus">MS0832</name>
</gene>
<accession>Q65UC1</accession>
<feature type="chain" id="PRO_0000309097" description="Serine/threonine transporter SstT">
    <location>
        <begin position="1"/>
        <end position="413"/>
    </location>
</feature>
<feature type="transmembrane region" description="Helical" evidence="1">
    <location>
        <begin position="21"/>
        <end position="41"/>
    </location>
</feature>
<feature type="transmembrane region" description="Helical" evidence="1">
    <location>
        <begin position="61"/>
        <end position="81"/>
    </location>
</feature>
<feature type="transmembrane region" description="Helical" evidence="1">
    <location>
        <begin position="89"/>
        <end position="109"/>
    </location>
</feature>
<feature type="transmembrane region" description="Helical" evidence="1">
    <location>
        <begin position="146"/>
        <end position="166"/>
    </location>
</feature>
<feature type="transmembrane region" description="Helical" evidence="1">
    <location>
        <begin position="189"/>
        <end position="209"/>
    </location>
</feature>
<feature type="transmembrane region" description="Helical" evidence="1">
    <location>
        <begin position="224"/>
        <end position="244"/>
    </location>
</feature>
<feature type="transmembrane region" description="Helical" evidence="1">
    <location>
        <begin position="305"/>
        <end position="325"/>
    </location>
</feature>
<feature type="transmembrane region" description="Helical" evidence="1">
    <location>
        <begin position="337"/>
        <end position="357"/>
    </location>
</feature>
<feature type="transmembrane region" description="Helical" evidence="1">
    <location>
        <begin position="363"/>
        <end position="383"/>
    </location>
</feature>
<comment type="function">
    <text evidence="1">Involved in the import of serine and threonine into the cell, with the concomitant import of sodium (symport system).</text>
</comment>
<comment type="catalytic activity">
    <reaction evidence="1">
        <text>L-serine(in) + Na(+)(in) = L-serine(out) + Na(+)(out)</text>
        <dbReference type="Rhea" id="RHEA:29575"/>
        <dbReference type="ChEBI" id="CHEBI:29101"/>
        <dbReference type="ChEBI" id="CHEBI:33384"/>
    </reaction>
    <physiologicalReaction direction="right-to-left" evidence="1">
        <dbReference type="Rhea" id="RHEA:29577"/>
    </physiologicalReaction>
</comment>
<comment type="catalytic activity">
    <reaction evidence="1">
        <text>L-threonine(in) + Na(+)(in) = L-threonine(out) + Na(+)(out)</text>
        <dbReference type="Rhea" id="RHEA:69999"/>
        <dbReference type="ChEBI" id="CHEBI:29101"/>
        <dbReference type="ChEBI" id="CHEBI:57926"/>
    </reaction>
    <physiologicalReaction direction="right-to-left" evidence="1">
        <dbReference type="Rhea" id="RHEA:70001"/>
    </physiologicalReaction>
</comment>
<comment type="subcellular location">
    <subcellularLocation>
        <location evidence="1">Cell inner membrane</location>
        <topology evidence="1">Multi-pass membrane protein</topology>
    </subcellularLocation>
</comment>
<comment type="similarity">
    <text evidence="1">Belongs to the dicarboxylate/amino acid:cation symporter (DAACS) (TC 2.A.23) family.</text>
</comment>
<reference key="1">
    <citation type="journal article" date="2004" name="Nat. Biotechnol.">
        <title>The genome sequence of the capnophilic rumen bacterium Mannheimia succiniciproducens.</title>
        <authorList>
            <person name="Hong S.H."/>
            <person name="Kim J.S."/>
            <person name="Lee S.Y."/>
            <person name="In Y.H."/>
            <person name="Choi S.S."/>
            <person name="Rih J.-K."/>
            <person name="Kim C.H."/>
            <person name="Jeong H."/>
            <person name="Hur C.G."/>
            <person name="Kim J.J."/>
        </authorList>
    </citation>
    <scope>NUCLEOTIDE SEQUENCE [LARGE SCALE GENOMIC DNA]</scope>
    <source>
        <strain>KCTC 0769BP / MBEL55E</strain>
    </source>
</reference>
<sequence length="413" mass="43748">MNISRLFSFLFHGNLVKRISIGLLLGIIFALVSPSLESALGFHLAEKMGLLGQIFVRSLRSVAPILVFVLVIAAIANKKVGSKSNMKDIIYLYLIGTFLSALTAVFASFMFPTTIALATNEAELSPPGKITEVLTALIFNVVDNPITALFNANFIGILAWAIGLGITLRYASETTKNVMNDFAEAVSKIVHFIISFAPIGVFGLVASTLADKGLSALLDYVQLLAVLVGSMLFVAFVINPIIVFWKIRRNPYPLVWECIRVSGVTAFFTRSSAANIPVNMELAKRLNLDEETYSVSIPLGATINMGGAAITITVLTLAAVFTLGIEVSIPTAILLSLVASICACGASGVAGGSLLLIPLACSLFGISNDIAAQVIGVGFIIGVLQDSTETALNSSTDVLFTAAACMSEERKNS</sequence>
<protein>
    <recommendedName>
        <fullName evidence="1">Serine/threonine transporter SstT</fullName>
    </recommendedName>
    <alternativeName>
        <fullName evidence="1">Na(+)/serine-threonine symporter</fullName>
    </alternativeName>
</protein>
<dbReference type="EMBL" id="AE016827">
    <property type="protein sequence ID" value="AAU37439.1"/>
    <property type="molecule type" value="Genomic_DNA"/>
</dbReference>
<dbReference type="RefSeq" id="WP_011200011.1">
    <property type="nucleotide sequence ID" value="NC_006300.1"/>
</dbReference>
<dbReference type="SMR" id="Q65UC1"/>
<dbReference type="STRING" id="221988.MS0832"/>
<dbReference type="KEGG" id="msu:MS0832"/>
<dbReference type="eggNOG" id="COG3633">
    <property type="taxonomic scope" value="Bacteria"/>
</dbReference>
<dbReference type="HOGENOM" id="CLU_044581_0_0_6"/>
<dbReference type="OrthoDB" id="9768885at2"/>
<dbReference type="Proteomes" id="UP000000607">
    <property type="component" value="Chromosome"/>
</dbReference>
<dbReference type="GO" id="GO:0005886">
    <property type="term" value="C:plasma membrane"/>
    <property type="evidence" value="ECO:0007669"/>
    <property type="project" value="UniProtKB-SubCell"/>
</dbReference>
<dbReference type="GO" id="GO:0005295">
    <property type="term" value="F:neutral L-amino acid:sodium symporter activity"/>
    <property type="evidence" value="ECO:0007669"/>
    <property type="project" value="TreeGrafter"/>
</dbReference>
<dbReference type="GO" id="GO:0032329">
    <property type="term" value="P:serine transport"/>
    <property type="evidence" value="ECO:0007669"/>
    <property type="project" value="InterPro"/>
</dbReference>
<dbReference type="GO" id="GO:0015826">
    <property type="term" value="P:threonine transport"/>
    <property type="evidence" value="ECO:0007669"/>
    <property type="project" value="InterPro"/>
</dbReference>
<dbReference type="FunFam" id="1.10.3860.10:FF:000003">
    <property type="entry name" value="Serine/threonine transporter sstT"/>
    <property type="match status" value="1"/>
</dbReference>
<dbReference type="Gene3D" id="1.10.3860.10">
    <property type="entry name" value="Sodium:dicarboxylate symporter"/>
    <property type="match status" value="1"/>
</dbReference>
<dbReference type="HAMAP" id="MF_01582">
    <property type="entry name" value="Ser_Thr_transp_SstT"/>
    <property type="match status" value="1"/>
</dbReference>
<dbReference type="InterPro" id="IPR001991">
    <property type="entry name" value="Na-dicarboxylate_symporter"/>
</dbReference>
<dbReference type="InterPro" id="IPR036458">
    <property type="entry name" value="Na:dicarbo_symporter_sf"/>
</dbReference>
<dbReference type="InterPro" id="IPR023025">
    <property type="entry name" value="Ser_Thr_transp_SstT"/>
</dbReference>
<dbReference type="NCBIfam" id="NF010151">
    <property type="entry name" value="PRK13628.1"/>
    <property type="match status" value="1"/>
</dbReference>
<dbReference type="PANTHER" id="PTHR42865">
    <property type="entry name" value="PROTON/GLUTAMATE-ASPARTATE SYMPORTER"/>
    <property type="match status" value="1"/>
</dbReference>
<dbReference type="PANTHER" id="PTHR42865:SF8">
    <property type="entry name" value="SERINE_THREONINE TRANSPORTER SSTT"/>
    <property type="match status" value="1"/>
</dbReference>
<dbReference type="Pfam" id="PF00375">
    <property type="entry name" value="SDF"/>
    <property type="match status" value="1"/>
</dbReference>
<dbReference type="PRINTS" id="PR00173">
    <property type="entry name" value="EDTRNSPORT"/>
</dbReference>
<dbReference type="SUPFAM" id="SSF118215">
    <property type="entry name" value="Proton glutamate symport protein"/>
    <property type="match status" value="1"/>
</dbReference>
<organism>
    <name type="scientific">Mannheimia succiniciproducens (strain KCTC 0769BP / MBEL55E)</name>
    <dbReference type="NCBI Taxonomy" id="221988"/>
    <lineage>
        <taxon>Bacteria</taxon>
        <taxon>Pseudomonadati</taxon>
        <taxon>Pseudomonadota</taxon>
        <taxon>Gammaproteobacteria</taxon>
        <taxon>Pasteurellales</taxon>
        <taxon>Pasteurellaceae</taxon>
        <taxon>Basfia</taxon>
    </lineage>
</organism>
<name>SSTT_MANSM</name>
<proteinExistence type="inferred from homology"/>